<accession>B3EKM6</accession>
<name>TRPF_CHLPB</name>
<organism>
    <name type="scientific">Chlorobium phaeobacteroides (strain BS1)</name>
    <dbReference type="NCBI Taxonomy" id="331678"/>
    <lineage>
        <taxon>Bacteria</taxon>
        <taxon>Pseudomonadati</taxon>
        <taxon>Chlorobiota</taxon>
        <taxon>Chlorobiia</taxon>
        <taxon>Chlorobiales</taxon>
        <taxon>Chlorobiaceae</taxon>
        <taxon>Chlorobium/Pelodictyon group</taxon>
        <taxon>Chlorobium</taxon>
    </lineage>
</organism>
<evidence type="ECO:0000255" key="1">
    <source>
        <dbReference type="HAMAP-Rule" id="MF_00135"/>
    </source>
</evidence>
<proteinExistence type="inferred from homology"/>
<keyword id="KW-0028">Amino-acid biosynthesis</keyword>
<keyword id="KW-0057">Aromatic amino acid biosynthesis</keyword>
<keyword id="KW-0413">Isomerase</keyword>
<keyword id="KW-0822">Tryptophan biosynthesis</keyword>
<gene>
    <name evidence="1" type="primary">trpF</name>
    <name type="ordered locus">Cphamn1_1642</name>
</gene>
<dbReference type="EC" id="5.3.1.24" evidence="1"/>
<dbReference type="EMBL" id="CP001101">
    <property type="protein sequence ID" value="ACE04562.1"/>
    <property type="molecule type" value="Genomic_DNA"/>
</dbReference>
<dbReference type="SMR" id="B3EKM6"/>
<dbReference type="STRING" id="331678.Cphamn1_1642"/>
<dbReference type="KEGG" id="cpb:Cphamn1_1642"/>
<dbReference type="eggNOG" id="COG0135">
    <property type="taxonomic scope" value="Bacteria"/>
</dbReference>
<dbReference type="HOGENOM" id="CLU_076364_2_0_10"/>
<dbReference type="OrthoDB" id="9786954at2"/>
<dbReference type="UniPathway" id="UPA00035">
    <property type="reaction ID" value="UER00042"/>
</dbReference>
<dbReference type="GO" id="GO:0004640">
    <property type="term" value="F:phosphoribosylanthranilate isomerase activity"/>
    <property type="evidence" value="ECO:0007669"/>
    <property type="project" value="UniProtKB-UniRule"/>
</dbReference>
<dbReference type="GO" id="GO:0000162">
    <property type="term" value="P:L-tryptophan biosynthetic process"/>
    <property type="evidence" value="ECO:0007669"/>
    <property type="project" value="UniProtKB-UniRule"/>
</dbReference>
<dbReference type="CDD" id="cd00405">
    <property type="entry name" value="PRAI"/>
    <property type="match status" value="1"/>
</dbReference>
<dbReference type="Gene3D" id="3.20.20.70">
    <property type="entry name" value="Aldolase class I"/>
    <property type="match status" value="1"/>
</dbReference>
<dbReference type="HAMAP" id="MF_00135">
    <property type="entry name" value="PRAI"/>
    <property type="match status" value="1"/>
</dbReference>
<dbReference type="InterPro" id="IPR013785">
    <property type="entry name" value="Aldolase_TIM"/>
</dbReference>
<dbReference type="InterPro" id="IPR001240">
    <property type="entry name" value="PRAI_dom"/>
</dbReference>
<dbReference type="InterPro" id="IPR011060">
    <property type="entry name" value="RibuloseP-bd_barrel"/>
</dbReference>
<dbReference type="InterPro" id="IPR044643">
    <property type="entry name" value="TrpF_fam"/>
</dbReference>
<dbReference type="PANTHER" id="PTHR42894">
    <property type="entry name" value="N-(5'-PHOSPHORIBOSYL)ANTHRANILATE ISOMERASE"/>
    <property type="match status" value="1"/>
</dbReference>
<dbReference type="PANTHER" id="PTHR42894:SF1">
    <property type="entry name" value="N-(5'-PHOSPHORIBOSYL)ANTHRANILATE ISOMERASE"/>
    <property type="match status" value="1"/>
</dbReference>
<dbReference type="Pfam" id="PF00697">
    <property type="entry name" value="PRAI"/>
    <property type="match status" value="1"/>
</dbReference>
<dbReference type="SUPFAM" id="SSF51366">
    <property type="entry name" value="Ribulose-phoshate binding barrel"/>
    <property type="match status" value="1"/>
</dbReference>
<comment type="catalytic activity">
    <reaction evidence="1">
        <text>N-(5-phospho-beta-D-ribosyl)anthranilate = 1-(2-carboxyphenylamino)-1-deoxy-D-ribulose 5-phosphate</text>
        <dbReference type="Rhea" id="RHEA:21540"/>
        <dbReference type="ChEBI" id="CHEBI:18277"/>
        <dbReference type="ChEBI" id="CHEBI:58613"/>
        <dbReference type="EC" id="5.3.1.24"/>
    </reaction>
</comment>
<comment type="pathway">
    <text evidence="1">Amino-acid biosynthesis; L-tryptophan biosynthesis; L-tryptophan from chorismate: step 3/5.</text>
</comment>
<comment type="similarity">
    <text evidence="1">Belongs to the TrpF family.</text>
</comment>
<reference key="1">
    <citation type="submission" date="2008-06" db="EMBL/GenBank/DDBJ databases">
        <title>Complete sequence of Chlorobium phaeobacteroides BS1.</title>
        <authorList>
            <consortium name="US DOE Joint Genome Institute"/>
            <person name="Lucas S."/>
            <person name="Copeland A."/>
            <person name="Lapidus A."/>
            <person name="Glavina del Rio T."/>
            <person name="Dalin E."/>
            <person name="Tice H."/>
            <person name="Bruce D."/>
            <person name="Goodwin L."/>
            <person name="Pitluck S."/>
            <person name="Schmutz J."/>
            <person name="Larimer F."/>
            <person name="Land M."/>
            <person name="Hauser L."/>
            <person name="Kyrpides N."/>
            <person name="Ovchinnikova G."/>
            <person name="Li T."/>
            <person name="Liu Z."/>
            <person name="Zhao F."/>
            <person name="Overmann J."/>
            <person name="Bryant D.A."/>
            <person name="Richardson P."/>
        </authorList>
    </citation>
    <scope>NUCLEOTIDE SEQUENCE [LARGE SCALE GENOMIC DNA]</scope>
    <source>
        <strain>BS1</strain>
    </source>
</reference>
<feature type="chain" id="PRO_1000197090" description="N-(5'-phosphoribosyl)anthranilate isomerase">
    <location>
        <begin position="1"/>
        <end position="217"/>
    </location>
</feature>
<sequence length="217" mass="23636">MTKIKICGITNPDDAIASCTAGADALGFNFSKASPRYIQPETALSIIEKLPPFISCVGVFVEQEPHEVNQICNLCRLDHAQLHAERYTAEKAVAVRGAKVIRVFRTGPDFTIDVVRTFAEETGITSFLFDAYRPGQPGGTGHVIEQQLAQKIFRETEHIGFGILAGGLKPENVAEATSTVRPYAVDTASGVEESPGRKNHQKIRDFVSAVHRSAELL</sequence>
<protein>
    <recommendedName>
        <fullName evidence="1">N-(5'-phosphoribosyl)anthranilate isomerase</fullName>
        <shortName evidence="1">PRAI</shortName>
        <ecNumber evidence="1">5.3.1.24</ecNumber>
    </recommendedName>
</protein>